<name>AKR_CITSI</name>
<organism>
    <name type="scientific">Citrus sinensis</name>
    <name type="common">Sweet orange</name>
    <name type="synonym">Citrus aurantium var. sinensis</name>
    <dbReference type="NCBI Taxonomy" id="2711"/>
    <lineage>
        <taxon>Eukaryota</taxon>
        <taxon>Viridiplantae</taxon>
        <taxon>Streptophyta</taxon>
        <taxon>Embryophyta</taxon>
        <taxon>Tracheophyta</taxon>
        <taxon>Spermatophyta</taxon>
        <taxon>Magnoliopsida</taxon>
        <taxon>eudicotyledons</taxon>
        <taxon>Gunneridae</taxon>
        <taxon>Pentapetalae</taxon>
        <taxon>rosids</taxon>
        <taxon>malvids</taxon>
        <taxon>Sapindales</taxon>
        <taxon>Rutaceae</taxon>
        <taxon>Aurantioideae</taxon>
        <taxon>Citrus</taxon>
    </lineage>
</organism>
<comment type="function">
    <text evidence="2">Aldo-keto reductase involved in the biosynthesis of limonoids triterpene natural products such as limonin, a compound with insecticidal activity responsible for the bitter taste in citrus (PubMed:36701471). Can use (1S)-1,7-diacetoxy-luvungin A as substrate (PubMed:36701471).</text>
</comment>
<comment type="catalytic activity">
    <reaction evidence="2">
        <text>(1S)-1,7-diacetoxy-luvungin A + AH2 + H2O = (1R,2R,3S,8R,10R,11R,15S,16S)-3-(acetyloxy)-15-[(4R)-4-[(2S)-3,3-dimethyloxiran-2-yl]-1,4-dihydroxybutan-2-yl]-2,7,7,11,16-pentamethyl-5-oxo-6-oxatetracyclo[9.7.0.0(2,8).0(12,16)]octadec-12-en-10-yl acetate + acetate + A + H(+)</text>
        <dbReference type="Rhea" id="RHEA:80339"/>
        <dbReference type="ChEBI" id="CHEBI:13193"/>
        <dbReference type="ChEBI" id="CHEBI:15377"/>
        <dbReference type="ChEBI" id="CHEBI:15378"/>
        <dbReference type="ChEBI" id="CHEBI:17499"/>
        <dbReference type="ChEBI" id="CHEBI:30089"/>
        <dbReference type="ChEBI" id="CHEBI:231479"/>
        <dbReference type="ChEBI" id="CHEBI:231480"/>
    </reaction>
    <physiologicalReaction direction="left-to-right" evidence="2">
        <dbReference type="Rhea" id="RHEA:80340"/>
    </physiologicalReaction>
</comment>
<comment type="pathway">
    <text evidence="2">Secondary metabolite biosynthesis; terpenoid biosynthesis.</text>
</comment>
<comment type="tissue specificity">
    <text evidence="2">Expressed in flowers, maturing fruits and in juice vesicles.</text>
</comment>
<comment type="similarity">
    <text evidence="4">Belongs to the aldo/keto reductase family.</text>
</comment>
<proteinExistence type="evidence at protein level"/>
<protein>
    <recommendedName>
        <fullName evidence="3">(1S)-1,7-diacetoxy-luvungin A aldo-keto reductase</fullName>
        <shortName evidence="3">CsAKR</shortName>
        <ecNumber evidence="2">1.1.1.-</ecNumber>
    </recommendedName>
</protein>
<dbReference type="EC" id="1.1.1.-" evidence="2"/>
<dbReference type="EMBL" id="OQ091244">
    <property type="protein sequence ID" value="WCJ12489.1"/>
    <property type="molecule type" value="mRNA"/>
</dbReference>
<dbReference type="EMBL" id="KK792440">
    <property type="status" value="NOT_ANNOTATED_CDS"/>
    <property type="molecule type" value="Genomic_DNA"/>
</dbReference>
<dbReference type="SMR" id="P0DXG9"/>
<dbReference type="UniPathway" id="UPA00213"/>
<dbReference type="Proteomes" id="UP000027120">
    <property type="component" value="Unassembled WGS sequence"/>
</dbReference>
<dbReference type="GO" id="GO:0016616">
    <property type="term" value="F:oxidoreductase activity, acting on the CH-OH group of donors, NAD or NADP as acceptor"/>
    <property type="evidence" value="ECO:0007669"/>
    <property type="project" value="InterPro"/>
</dbReference>
<dbReference type="CDD" id="cd19124">
    <property type="entry name" value="AKR_AKR4A_4B"/>
    <property type="match status" value="1"/>
</dbReference>
<dbReference type="FunFam" id="3.20.20.100:FF:000014">
    <property type="entry name" value="NAD(P)-linked oxidoreductase superfamily protein"/>
    <property type="match status" value="1"/>
</dbReference>
<dbReference type="Gene3D" id="3.20.20.100">
    <property type="entry name" value="NADP-dependent oxidoreductase domain"/>
    <property type="match status" value="1"/>
</dbReference>
<dbReference type="InterPro" id="IPR020471">
    <property type="entry name" value="AKR"/>
</dbReference>
<dbReference type="InterPro" id="IPR044497">
    <property type="entry name" value="AKR4A/B"/>
</dbReference>
<dbReference type="InterPro" id="IPR018170">
    <property type="entry name" value="Aldo/ket_reductase_CS"/>
</dbReference>
<dbReference type="InterPro" id="IPR023210">
    <property type="entry name" value="NADP_OxRdtase_dom"/>
</dbReference>
<dbReference type="InterPro" id="IPR036812">
    <property type="entry name" value="NADP_OxRdtase_dom_sf"/>
</dbReference>
<dbReference type="PANTHER" id="PTHR11732">
    <property type="entry name" value="ALDO/KETO REDUCTASE"/>
    <property type="match status" value="1"/>
</dbReference>
<dbReference type="Pfam" id="PF00248">
    <property type="entry name" value="Aldo_ket_red"/>
    <property type="match status" value="1"/>
</dbReference>
<dbReference type="PIRSF" id="PIRSF000097">
    <property type="entry name" value="AKR"/>
    <property type="match status" value="1"/>
</dbReference>
<dbReference type="PRINTS" id="PR00069">
    <property type="entry name" value="ALDKETRDTASE"/>
</dbReference>
<dbReference type="SUPFAM" id="SSF51430">
    <property type="entry name" value="NAD(P)-linked oxidoreductase"/>
    <property type="match status" value="1"/>
</dbReference>
<dbReference type="PROSITE" id="PS00798">
    <property type="entry name" value="ALDOKETO_REDUCTASE_1"/>
    <property type="match status" value="1"/>
</dbReference>
<dbReference type="PROSITE" id="PS00062">
    <property type="entry name" value="ALDOKETO_REDUCTASE_2"/>
    <property type="match status" value="1"/>
</dbReference>
<dbReference type="PROSITE" id="PS00063">
    <property type="entry name" value="ALDOKETO_REDUCTASE_3"/>
    <property type="match status" value="1"/>
</dbReference>
<evidence type="ECO:0000250" key="1">
    <source>
        <dbReference type="UniProtKB" id="Q8CG76"/>
    </source>
</evidence>
<evidence type="ECO:0000269" key="2">
    <source>
    </source>
</evidence>
<evidence type="ECO:0000303" key="3">
    <source>
    </source>
</evidence>
<evidence type="ECO:0000305" key="4"/>
<reference key="1">
    <citation type="journal article" date="2023" name="Science">
        <title>Complex scaffold remodeling in plant triterpene biosynthesis.</title>
        <authorList>
            <person name="De La Pena R."/>
            <person name="Hodgson H."/>
            <person name="Liu J.C."/>
            <person name="Stephenson M.J."/>
            <person name="Martin A.C."/>
            <person name="Owen C."/>
            <person name="Harkess A."/>
            <person name="Leebens-Mack J."/>
            <person name="Jimenez L.E."/>
            <person name="Osbourn A."/>
            <person name="Sattely E.S."/>
        </authorList>
    </citation>
    <scope>NUCLEOTIDE SEQUENCE [MRNA]</scope>
    <scope>FUNCTION</scope>
    <scope>CATALYTIC ACTIVITY</scope>
    <scope>PATHWAY</scope>
    <scope>TISSUE SPECIFICITY</scope>
    <source>
        <strain>cv. Valencia</strain>
    </source>
</reference>
<reference key="2">
    <citation type="submission" date="2014-04" db="EMBL/GenBank/DDBJ databases">
        <authorList>
            <consortium name="International Citrus Genome Consortium"/>
            <person name="Gmitter F."/>
            <person name="Chen C."/>
            <person name="Farmerie W."/>
            <person name="Harkins T."/>
            <person name="Desany B."/>
            <person name="Mohiuddin M."/>
            <person name="Kodira C."/>
            <person name="Borodovsky M."/>
            <person name="Lomsadze A."/>
            <person name="Burns P."/>
            <person name="Jenkins J."/>
            <person name="Prochnik S."/>
            <person name="Shu S."/>
            <person name="Chapman J."/>
            <person name="Pitluck S."/>
            <person name="Schmutz J."/>
            <person name="Rokhsar D."/>
        </authorList>
    </citation>
    <scope>NUCLEOTIDE SEQUENCE [LARGE SCALE GENOMIC DNA]</scope>
    <source>
        <strain>cv. Ridge Pineapple sweet orange</strain>
    </source>
</reference>
<feature type="chain" id="PRO_0000461459" description="(1S)-1,7-diacetoxy-luvungin A aldo-keto reductase">
    <location>
        <begin position="1"/>
        <end position="318"/>
    </location>
</feature>
<feature type="active site" description="Proton donor" evidence="1">
    <location>
        <position position="54"/>
    </location>
</feature>
<sequence>MGTAIPEEPLGSTEKSIPLVGFGTVEYPLNEAFKERVLHAIKLGYRHFDTAASYPSEQPLGEALAEALRLGLVKSRDELFITSKLWLTDSYCGRVIPGLQKTLKTLGLEYLDLYLVHFPVSLIPEATYPVKPEDIRPFDYEGVWEEMEKCQELGLTKTIGVSNFTCKKLERLLATAKIPPAVNQVEMNPIWQQKKLREYCKEKGIHFSAFSPLGAVGTNWGHNRVMENEVLKQIAKAKGKTVAQVAIRWVYQQGVSVIVKSFNKERMEQNLDIFDWELSAEELQKIEQIPQYRGSRAEAYLSENGPFRTVEEIWDGEI</sequence>
<keyword id="KW-0560">Oxidoreductase</keyword>
<keyword id="KW-1185">Reference proteome</keyword>
<gene>
    <name evidence="3" type="primary">AKR</name>
</gene>
<accession>P0DXG9</accession>